<dbReference type="EC" id="2.1.3.3"/>
<dbReference type="EMBL" id="BA000003">
    <property type="protein sequence ID" value="BAB13072.1"/>
    <property type="molecule type" value="Genomic_DNA"/>
</dbReference>
<dbReference type="RefSeq" id="NP_240186.1">
    <property type="nucleotide sequence ID" value="NC_002528.1"/>
</dbReference>
<dbReference type="RefSeq" id="WP_010896090.1">
    <property type="nucleotide sequence ID" value="NC_002528.1"/>
</dbReference>
<dbReference type="SMR" id="P57449"/>
<dbReference type="STRING" id="563178.BUAP5A_361"/>
<dbReference type="EnsemblBacteria" id="BAB13072">
    <property type="protein sequence ID" value="BAB13072"/>
    <property type="gene ID" value="BAB13072"/>
</dbReference>
<dbReference type="KEGG" id="buc:BU368"/>
<dbReference type="PATRIC" id="fig|107806.10.peg.382"/>
<dbReference type="eggNOG" id="COG0078">
    <property type="taxonomic scope" value="Bacteria"/>
</dbReference>
<dbReference type="HOGENOM" id="CLU_043846_3_1_6"/>
<dbReference type="UniPathway" id="UPA00068">
    <property type="reaction ID" value="UER00112"/>
</dbReference>
<dbReference type="Proteomes" id="UP000001806">
    <property type="component" value="Chromosome"/>
</dbReference>
<dbReference type="GO" id="GO:0005737">
    <property type="term" value="C:cytoplasm"/>
    <property type="evidence" value="ECO:0007669"/>
    <property type="project" value="UniProtKB-SubCell"/>
</dbReference>
<dbReference type="GO" id="GO:0016597">
    <property type="term" value="F:amino acid binding"/>
    <property type="evidence" value="ECO:0007669"/>
    <property type="project" value="InterPro"/>
</dbReference>
<dbReference type="GO" id="GO:0004585">
    <property type="term" value="F:ornithine carbamoyltransferase activity"/>
    <property type="evidence" value="ECO:0007669"/>
    <property type="project" value="UniProtKB-UniRule"/>
</dbReference>
<dbReference type="GO" id="GO:0042450">
    <property type="term" value="P:arginine biosynthetic process via ornithine"/>
    <property type="evidence" value="ECO:0007669"/>
    <property type="project" value="TreeGrafter"/>
</dbReference>
<dbReference type="GO" id="GO:0019240">
    <property type="term" value="P:citrulline biosynthetic process"/>
    <property type="evidence" value="ECO:0007669"/>
    <property type="project" value="TreeGrafter"/>
</dbReference>
<dbReference type="GO" id="GO:0006526">
    <property type="term" value="P:L-arginine biosynthetic process"/>
    <property type="evidence" value="ECO:0007669"/>
    <property type="project" value="UniProtKB-UniRule"/>
</dbReference>
<dbReference type="FunFam" id="3.40.50.1370:FF:000008">
    <property type="entry name" value="Ornithine carbamoyltransferase"/>
    <property type="match status" value="1"/>
</dbReference>
<dbReference type="Gene3D" id="3.40.50.1370">
    <property type="entry name" value="Aspartate/ornithine carbamoyltransferase"/>
    <property type="match status" value="2"/>
</dbReference>
<dbReference type="HAMAP" id="MF_01109">
    <property type="entry name" value="OTCase"/>
    <property type="match status" value="1"/>
</dbReference>
<dbReference type="InterPro" id="IPR006132">
    <property type="entry name" value="Asp/Orn_carbamoyltranf_P-bd"/>
</dbReference>
<dbReference type="InterPro" id="IPR006130">
    <property type="entry name" value="Asp/Orn_carbamoylTrfase"/>
</dbReference>
<dbReference type="InterPro" id="IPR036901">
    <property type="entry name" value="Asp/Orn_carbamoylTrfase_sf"/>
</dbReference>
<dbReference type="InterPro" id="IPR006131">
    <property type="entry name" value="Asp_carbamoyltransf_Asp/Orn-bd"/>
</dbReference>
<dbReference type="InterPro" id="IPR002292">
    <property type="entry name" value="Orn/put_carbamltrans"/>
</dbReference>
<dbReference type="InterPro" id="IPR024904">
    <property type="entry name" value="OTCase_ArgI"/>
</dbReference>
<dbReference type="NCBIfam" id="TIGR00658">
    <property type="entry name" value="orni_carb_tr"/>
    <property type="match status" value="1"/>
</dbReference>
<dbReference type="PANTHER" id="PTHR45753:SF4">
    <property type="entry name" value="ORNITHINE CARBAMOYLTRANSFERASE SUBUNIT F-RELATED"/>
    <property type="match status" value="1"/>
</dbReference>
<dbReference type="PANTHER" id="PTHR45753">
    <property type="entry name" value="ORNITHINE CARBAMOYLTRANSFERASE, MITOCHONDRIAL"/>
    <property type="match status" value="1"/>
</dbReference>
<dbReference type="Pfam" id="PF00185">
    <property type="entry name" value="OTCace"/>
    <property type="match status" value="1"/>
</dbReference>
<dbReference type="Pfam" id="PF02729">
    <property type="entry name" value="OTCace_N"/>
    <property type="match status" value="1"/>
</dbReference>
<dbReference type="PRINTS" id="PR00100">
    <property type="entry name" value="AOTCASE"/>
</dbReference>
<dbReference type="PRINTS" id="PR00102">
    <property type="entry name" value="OTCASE"/>
</dbReference>
<dbReference type="SUPFAM" id="SSF53671">
    <property type="entry name" value="Aspartate/ornithine carbamoyltransferase"/>
    <property type="match status" value="1"/>
</dbReference>
<dbReference type="PROSITE" id="PS00097">
    <property type="entry name" value="CARBAMOYLTRANSFERASE"/>
    <property type="match status" value="1"/>
</dbReference>
<sequence length="338" mass="38865">MNNLYQRDCLRLLDFTSLELQNIITLAQKLKQYKKNNKEIQLLKKKNIALIFEKESTRTRCSFEVAAFDQGAHVTYLGPGSTHLGTKESIEDTAKILGRLYDGIQYRGHHHSTIEILAKNSKVPVWNGLTEKFHPTQLLADLLTIKEIFPERKFYEIKCAYVGDAHNNMGNSLLEAASLVGLDLRLVAPKECWPEKNIFKFCKEQMKNKKGNIICTENINEGVKNVDFIYTDVWVSMGESQEVWKKRIELLSSYQVNSLMLKITNNPQVKVLHCLPALHDQKTCTVKSILKKYGFKNGMEITDEVFQKNQKIIFEQAENRLHTIKAILVSSLLKTIKF</sequence>
<feature type="chain" id="PRO_0000112897" description="Ornithine carbamoyltransferase">
    <location>
        <begin position="1"/>
        <end position="338"/>
    </location>
</feature>
<feature type="binding site" evidence="2">
    <location>
        <begin position="56"/>
        <end position="59"/>
    </location>
    <ligand>
        <name>carbamoyl phosphate</name>
        <dbReference type="ChEBI" id="CHEBI:58228"/>
    </ligand>
</feature>
<feature type="binding site" evidence="2">
    <location>
        <position position="107"/>
    </location>
    <ligand>
        <name>carbamoyl phosphate</name>
        <dbReference type="ChEBI" id="CHEBI:58228"/>
    </ligand>
</feature>
<feature type="binding site" evidence="2">
    <location>
        <begin position="134"/>
        <end position="137"/>
    </location>
    <ligand>
        <name>carbamoyl phosphate</name>
        <dbReference type="ChEBI" id="CHEBI:58228"/>
    </ligand>
</feature>
<feature type="binding site" evidence="2">
    <location>
        <position position="168"/>
    </location>
    <ligand>
        <name>L-ornithine</name>
        <dbReference type="ChEBI" id="CHEBI:46911"/>
    </ligand>
</feature>
<feature type="binding site" evidence="2">
    <location>
        <position position="232"/>
    </location>
    <ligand>
        <name>L-ornithine</name>
        <dbReference type="ChEBI" id="CHEBI:46911"/>
    </ligand>
</feature>
<feature type="binding site" evidence="2">
    <location>
        <begin position="236"/>
        <end position="237"/>
    </location>
    <ligand>
        <name>L-ornithine</name>
        <dbReference type="ChEBI" id="CHEBI:46911"/>
    </ligand>
</feature>
<feature type="binding site" evidence="2">
    <location>
        <begin position="274"/>
        <end position="275"/>
    </location>
    <ligand>
        <name>carbamoyl phosphate</name>
        <dbReference type="ChEBI" id="CHEBI:58228"/>
    </ligand>
</feature>
<feature type="binding site" evidence="2">
    <location>
        <position position="320"/>
    </location>
    <ligand>
        <name>carbamoyl phosphate</name>
        <dbReference type="ChEBI" id="CHEBI:58228"/>
    </ligand>
</feature>
<proteinExistence type="inferred from homology"/>
<comment type="function">
    <text evidence="1">Reversibly catalyzes the transfer of the carbamoyl group from carbamoyl phosphate (CP) to the N(epsilon) atom of ornithine (ORN) to produce L-citrulline.</text>
</comment>
<comment type="catalytic activity">
    <reaction>
        <text>carbamoyl phosphate + L-ornithine = L-citrulline + phosphate + H(+)</text>
        <dbReference type="Rhea" id="RHEA:19513"/>
        <dbReference type="ChEBI" id="CHEBI:15378"/>
        <dbReference type="ChEBI" id="CHEBI:43474"/>
        <dbReference type="ChEBI" id="CHEBI:46911"/>
        <dbReference type="ChEBI" id="CHEBI:57743"/>
        <dbReference type="ChEBI" id="CHEBI:58228"/>
        <dbReference type="EC" id="2.1.3.3"/>
    </reaction>
</comment>
<comment type="pathway">
    <text>Amino-acid biosynthesis; L-arginine biosynthesis; L-arginine from L-ornithine and carbamoyl phosphate: step 1/3.</text>
</comment>
<comment type="subcellular location">
    <subcellularLocation>
        <location evidence="1">Cytoplasm</location>
    </subcellularLocation>
</comment>
<comment type="similarity">
    <text evidence="3">Belongs to the aspartate/ornithine carbamoyltransferase superfamily. OTCase family.</text>
</comment>
<gene>
    <name type="primary">argI</name>
    <name type="ordered locus">BU368</name>
</gene>
<accession>P57449</accession>
<name>OTC_BUCAI</name>
<reference key="1">
    <citation type="journal article" date="2000" name="Nature">
        <title>Genome sequence of the endocellular bacterial symbiont of aphids Buchnera sp. APS.</title>
        <authorList>
            <person name="Shigenobu S."/>
            <person name="Watanabe H."/>
            <person name="Hattori M."/>
            <person name="Sakaki Y."/>
            <person name="Ishikawa H."/>
        </authorList>
    </citation>
    <scope>NUCLEOTIDE SEQUENCE [LARGE SCALE GENOMIC DNA]</scope>
    <source>
        <strain>APS</strain>
    </source>
</reference>
<evidence type="ECO:0000250" key="1"/>
<evidence type="ECO:0000255" key="2">
    <source>
        <dbReference type="HAMAP-Rule" id="MF_01109"/>
    </source>
</evidence>
<evidence type="ECO:0000305" key="3"/>
<keyword id="KW-0028">Amino-acid biosynthesis</keyword>
<keyword id="KW-0055">Arginine biosynthesis</keyword>
<keyword id="KW-0963">Cytoplasm</keyword>
<keyword id="KW-1185">Reference proteome</keyword>
<keyword id="KW-0808">Transferase</keyword>
<protein>
    <recommendedName>
        <fullName>Ornithine carbamoyltransferase</fullName>
        <shortName>OTCase</shortName>
        <ecNumber>2.1.3.3</ecNumber>
    </recommendedName>
</protein>
<organism>
    <name type="scientific">Buchnera aphidicola subsp. Acyrthosiphon pisum (strain APS)</name>
    <name type="common">Acyrthosiphon pisum symbiotic bacterium</name>
    <dbReference type="NCBI Taxonomy" id="107806"/>
    <lineage>
        <taxon>Bacteria</taxon>
        <taxon>Pseudomonadati</taxon>
        <taxon>Pseudomonadota</taxon>
        <taxon>Gammaproteobacteria</taxon>
        <taxon>Enterobacterales</taxon>
        <taxon>Erwiniaceae</taxon>
        <taxon>Buchnera</taxon>
    </lineage>
</organism>